<evidence type="ECO:0000255" key="1">
    <source>
        <dbReference type="PROSITE-ProRule" id="PRU00086"/>
    </source>
</evidence>
<evidence type="ECO:0000255" key="2">
    <source>
        <dbReference type="PROSITE-ProRule" id="PRU00175"/>
    </source>
</evidence>
<evidence type="ECO:0000256" key="3">
    <source>
        <dbReference type="SAM" id="MobiDB-lite"/>
    </source>
</evidence>
<evidence type="ECO:0000269" key="4">
    <source>
    </source>
</evidence>
<evidence type="ECO:0000269" key="5">
    <source>
    </source>
</evidence>
<evidence type="ECO:0000269" key="6">
    <source>
    </source>
</evidence>
<evidence type="ECO:0000269" key="7">
    <source>
    </source>
</evidence>
<evidence type="ECO:0000269" key="8">
    <source>
    </source>
</evidence>
<evidence type="ECO:0000269" key="9">
    <source>
    </source>
</evidence>
<evidence type="ECO:0000303" key="10">
    <source>
    </source>
</evidence>
<evidence type="ECO:0000303" key="11">
    <source>
    </source>
</evidence>
<evidence type="ECO:0000305" key="12"/>
<evidence type="ECO:0000305" key="13">
    <source>
    </source>
</evidence>
<evidence type="ECO:0000312" key="14">
    <source>
        <dbReference type="SGD" id="S000001157"/>
    </source>
</evidence>
<name>DMA1_YEAST</name>
<comment type="function">
    <text evidence="6 7 8 9">E3 ubiquitin-protein ligase which functions in cell cycle retarding in conjunction with the UBC4 and UBC13/MMS2 complex, 2 E2 ubiquitin conjugating enzymes (PubMed:18202552). Involved in nutritional control of the cell cycle (PubMed:15319434). Targets the G1 cyclin PCL1 for destruction (PubMed:23264631). Required for proper spindle positioning, likely regulating septin ring deposition at the bud neck (PubMed:15146058).</text>
</comment>
<comment type="catalytic activity">
    <reaction evidence="8 9">
        <text>S-ubiquitinyl-[E2 ubiquitin-conjugating enzyme]-L-cysteine + [acceptor protein]-L-lysine = [E2 ubiquitin-conjugating enzyme]-L-cysteine + N(6)-ubiquitinyl-[acceptor protein]-L-lysine.</text>
        <dbReference type="EC" id="2.3.2.27"/>
    </reaction>
</comment>
<comment type="subunit">
    <text evidence="7 9">Interacts with CDC123 (PubMed:15319434). Interacts with PCL1 (PubMed:23264631).</text>
</comment>
<comment type="interaction">
    <interactant intactId="EBI-24686">
        <id>P38823</id>
    </interactant>
    <interactant intactId="EBI-34676">
        <id>Q05791</id>
        <label>CDC123</label>
    </interactant>
    <organismsDiffer>false</organismsDiffer>
    <experiments>3</experiments>
</comment>
<comment type="subcellular location">
    <subcellularLocation>
        <location evidence="4">Cytoplasm</location>
    </subcellularLocation>
</comment>
<comment type="induction">
    <text evidence="9">Protein levels are regulated by nutrient status, being high under good nutrient conditions.</text>
</comment>
<comment type="PTM">
    <text evidence="8">UBC4-dependent autoubiquitination occurs at Lys-150, Lys-204, Lys-217, Lys-237, Lys-240, Lys-260, Lys-300, Lys-306, Lys-313 and Lys-317. UBC4-dependent autoubiquitination is responsible for DMA2 turnover. UBC13/MMS2-dependent autoubiquitination occurs at Lys-237 and Lys-306. Lys-204 and Lys-306 are also ubiquitinated in trans by DMA2 E3 ligase in association with UBC4.</text>
</comment>
<comment type="miscellaneous">
    <text evidence="5">Present with 2790 molecules/cell in log phase SD medium.</text>
</comment>
<comment type="similarity">
    <text evidence="12">Belongs to the DMA1 family.</text>
</comment>
<keyword id="KW-0131">Cell cycle</keyword>
<keyword id="KW-0132">Cell division</keyword>
<keyword id="KW-0963">Cytoplasm</keyword>
<keyword id="KW-1017">Isopeptide bond</keyword>
<keyword id="KW-0479">Metal-binding</keyword>
<keyword id="KW-0498">Mitosis</keyword>
<keyword id="KW-1185">Reference proteome</keyword>
<keyword id="KW-0808">Transferase</keyword>
<keyword id="KW-0832">Ubl conjugation</keyword>
<keyword id="KW-0833">Ubl conjugation pathway</keyword>
<keyword id="KW-0862">Zinc</keyword>
<keyword id="KW-0863">Zinc-finger</keyword>
<organism>
    <name type="scientific">Saccharomyces cerevisiae (strain ATCC 204508 / S288c)</name>
    <name type="common">Baker's yeast</name>
    <dbReference type="NCBI Taxonomy" id="559292"/>
    <lineage>
        <taxon>Eukaryota</taxon>
        <taxon>Fungi</taxon>
        <taxon>Dikarya</taxon>
        <taxon>Ascomycota</taxon>
        <taxon>Saccharomycotina</taxon>
        <taxon>Saccharomycetes</taxon>
        <taxon>Saccharomycetales</taxon>
        <taxon>Saccharomycetaceae</taxon>
        <taxon>Saccharomyces</taxon>
    </lineage>
</organism>
<accession>P38823</accession>
<accession>D3DL65</accession>
<accession>Q66GT1</accession>
<reference key="1">
    <citation type="journal article" date="2004" name="J. Biol. Chem.">
        <title>Cdc123 and checkpoint forkhead associated with RING proteins control the cell cycle by controlling eIF2gamma abundance.</title>
        <authorList>
            <person name="Bieganowski P."/>
            <person name="Shilinski K."/>
            <person name="Tsichlis P.N."/>
            <person name="Brenner C."/>
        </authorList>
    </citation>
    <scope>NUCLEOTIDE SEQUENCE [GENOMIC DNA]</scope>
    <scope>FUNCTION</scope>
    <scope>INTERACTION WITH CDC123</scope>
    <scope>MUTAGENESIS OF GLY-192; SER-220; HIS-223; CYS-345 AND HIS-350</scope>
</reference>
<reference key="2">
    <citation type="journal article" date="1994" name="Science">
        <title>Complete nucleotide sequence of Saccharomyces cerevisiae chromosome VIII.</title>
        <authorList>
            <person name="Johnston M."/>
            <person name="Andrews S."/>
            <person name="Brinkman R."/>
            <person name="Cooper J."/>
            <person name="Ding H."/>
            <person name="Dover J."/>
            <person name="Du Z."/>
            <person name="Favello A."/>
            <person name="Fulton L."/>
            <person name="Gattung S."/>
            <person name="Geisel C."/>
            <person name="Kirsten J."/>
            <person name="Kucaba T."/>
            <person name="Hillier L.W."/>
            <person name="Jier M."/>
            <person name="Johnston L."/>
            <person name="Langston Y."/>
            <person name="Latreille P."/>
            <person name="Louis E.J."/>
            <person name="Macri C."/>
            <person name="Mardis E."/>
            <person name="Menezes S."/>
            <person name="Mouser L."/>
            <person name="Nhan M."/>
            <person name="Rifkin L."/>
            <person name="Riles L."/>
            <person name="St Peter H."/>
            <person name="Trevaskis E."/>
            <person name="Vaughan K."/>
            <person name="Vignati D."/>
            <person name="Wilcox L."/>
            <person name="Wohldman P."/>
            <person name="Waterston R."/>
            <person name="Wilson R."/>
            <person name="Vaudin M."/>
        </authorList>
    </citation>
    <scope>NUCLEOTIDE SEQUENCE [LARGE SCALE GENOMIC DNA]</scope>
    <source>
        <strain>ATCC 204508 / S288c</strain>
    </source>
</reference>
<reference key="3">
    <citation type="journal article" date="2014" name="G3 (Bethesda)">
        <title>The reference genome sequence of Saccharomyces cerevisiae: Then and now.</title>
        <authorList>
            <person name="Engel S.R."/>
            <person name="Dietrich F.S."/>
            <person name="Fisk D.G."/>
            <person name="Binkley G."/>
            <person name="Balakrishnan R."/>
            <person name="Costanzo M.C."/>
            <person name="Dwight S.S."/>
            <person name="Hitz B.C."/>
            <person name="Karra K."/>
            <person name="Nash R.S."/>
            <person name="Weng S."/>
            <person name="Wong E.D."/>
            <person name="Lloyd P."/>
            <person name="Skrzypek M.S."/>
            <person name="Miyasato S.R."/>
            <person name="Simison M."/>
            <person name="Cherry J.M."/>
        </authorList>
    </citation>
    <scope>GENOME REANNOTATION</scope>
    <source>
        <strain>ATCC 204508 / S288c</strain>
    </source>
</reference>
<reference key="4">
    <citation type="journal article" date="2003" name="Nature">
        <title>Global analysis of protein localization in budding yeast.</title>
        <authorList>
            <person name="Huh W.-K."/>
            <person name="Falvo J.V."/>
            <person name="Gerke L.C."/>
            <person name="Carroll A.S."/>
            <person name="Howson R.W."/>
            <person name="Weissman J.S."/>
            <person name="O'Shea E.K."/>
        </authorList>
    </citation>
    <scope>SUBCELLULAR LOCATION [LARGE SCALE ANALYSIS]</scope>
</reference>
<reference key="5">
    <citation type="journal article" date="2003" name="Nature">
        <title>Global analysis of protein expression in yeast.</title>
        <authorList>
            <person name="Ghaemmaghami S."/>
            <person name="Huh W.-K."/>
            <person name="Bower K."/>
            <person name="Howson R.W."/>
            <person name="Belle A."/>
            <person name="Dephoure N."/>
            <person name="O'Shea E.K."/>
            <person name="Weissman J.S."/>
        </authorList>
    </citation>
    <scope>LEVEL OF PROTEIN EXPRESSION [LARGE SCALE ANALYSIS]</scope>
</reference>
<reference key="6">
    <citation type="journal article" date="2004" name="Mol. Biol. Cell">
        <title>Functional characterization of Dma1 and Dma2, the budding yeast homologues of Schizosaccharomyces pombe Dma1 and human Chfr.</title>
        <authorList>
            <person name="Fraschini R."/>
            <person name="Bilotta D."/>
            <person name="Lucchini G."/>
            <person name="Piatti S."/>
        </authorList>
    </citation>
    <scope>FUNCTION</scope>
</reference>
<reference key="7">
    <citation type="journal article" date="2008" name="Cell Cycle">
        <title>Yeast Chfr homologs retard cell cycle at G1 and G2/M via Ubc4 and Ubc13/Mms2-dependent ubiquitination.</title>
        <authorList>
            <person name="Loring G.L."/>
            <person name="Christensen K.C."/>
            <person name="Gerber S.A."/>
            <person name="Brenner C."/>
        </authorList>
    </citation>
    <scope>FUNCTION</scope>
    <scope>CATALYTIC ACTIVITY</scope>
    <scope>IDENTIFICATION BY MASS SPECTROMETRY</scope>
    <scope>UBIQUITINATION AT LYS-150; LYS-204; LYS-217; LYS-237; LYS-240; LYS-260; LYS-300; LYS-306; LYS-313 AND LYS-317</scope>
</reference>
<reference key="8">
    <citation type="journal article" date="2013" name="J. Biol. Chem.">
        <title>Defective in mitotic arrest 1 (Dma1) ubiquitin ligase controls G1 cyclin degradation.</title>
        <authorList>
            <person name="Hernandez-Ortega S."/>
            <person name="Bru S."/>
            <person name="Ricco N."/>
            <person name="Ramirez S."/>
            <person name="Casals N."/>
            <person name="Jimenez J."/>
            <person name="Isasa M."/>
            <person name="Crosas B."/>
            <person name="Clotet J."/>
        </authorList>
    </citation>
    <scope>FUNCTION</scope>
    <scope>CATALYTIC ACTIVITY</scope>
    <scope>INDUCTION</scope>
    <scope>INTERACTION WITH PCL1</scope>
</reference>
<proteinExistence type="evidence at protein level"/>
<feature type="chain" id="PRO_0000056338" description="E3 ubiquitin-protein ligase DMA1">
    <location>
        <begin position="1"/>
        <end position="416"/>
    </location>
</feature>
<feature type="domain" description="FHA" evidence="1">
    <location>
        <begin position="189"/>
        <end position="252"/>
    </location>
</feature>
<feature type="zinc finger region" description="RING-type" evidence="2">
    <location>
        <begin position="327"/>
        <end position="371"/>
    </location>
</feature>
<feature type="region of interest" description="Disordered" evidence="3">
    <location>
        <begin position="1"/>
        <end position="30"/>
    </location>
</feature>
<feature type="cross-link" description="Glycyl lysine isopeptide (Lys-Gly) (interchain with G-Cter in ubiquitin)" evidence="8">
    <location>
        <position position="150"/>
    </location>
</feature>
<feature type="cross-link" description="Glycyl lysine isopeptide (Lys-Gly) (interchain with G-Cter in ubiquitin)" evidence="8">
    <location>
        <position position="204"/>
    </location>
</feature>
<feature type="cross-link" description="Glycyl lysine isopeptide (Lys-Gly) (interchain with G-Cter in ubiquitin)" evidence="8">
    <location>
        <position position="217"/>
    </location>
</feature>
<feature type="cross-link" description="Glycyl lysine isopeptide (Lys-Gly) (interchain with G-Cter in ubiquitin)" evidence="8">
    <location>
        <position position="237"/>
    </location>
</feature>
<feature type="cross-link" description="Glycyl lysine isopeptide (Lys-Gly) (interchain with G-Cter in ubiquitin)" evidence="8">
    <location>
        <position position="240"/>
    </location>
</feature>
<feature type="cross-link" description="Glycyl lysine isopeptide (Lys-Gly) (interchain with G-Cter in ubiquitin)" evidence="8">
    <location>
        <position position="260"/>
    </location>
</feature>
<feature type="cross-link" description="Glycyl lysine isopeptide (Lys-Gly) (interchain with G-Cter in ubiquitin)" evidence="8">
    <location>
        <position position="300"/>
    </location>
</feature>
<feature type="cross-link" description="Glycyl lysine isopeptide (Lys-Gly) (interchain with G-Cter in ubiquitin)" evidence="8">
    <location>
        <position position="306"/>
    </location>
</feature>
<feature type="cross-link" description="Glycyl lysine isopeptide (Lys-Gly) (interchain with G-Cter in ubiquitin)" evidence="8">
    <location>
        <position position="313"/>
    </location>
</feature>
<feature type="cross-link" description="Glycyl lysine isopeptide (Lys-Gly) (interchain with G-Cter in ubiquitin)" evidence="8">
    <location>
        <position position="317"/>
    </location>
</feature>
<feature type="mutagenesis site" description="Decreases the interaction with CDC123." evidence="7">
    <original>G</original>
    <variation>E</variation>
    <location>
        <position position="192"/>
    </location>
</feature>
<feature type="mutagenesis site" description="Decreases the interaction with CDC123, when associated with L-223." evidence="7">
    <original>S</original>
    <variation>A</variation>
    <location>
        <position position="220"/>
    </location>
</feature>
<feature type="mutagenesis site" description="Decreases the interaction with CDC123, when associated with A-220." evidence="7">
    <original>H</original>
    <variation>L</variation>
    <location>
        <position position="223"/>
    </location>
</feature>
<feature type="mutagenesis site" description="Decreases the interaction with CDC123, when associated with A-350." evidence="7">
    <original>C</original>
    <variation>S</variation>
    <location>
        <position position="345"/>
    </location>
</feature>
<feature type="mutagenesis site" description="Decreases the interaction with CDC123, when associated with S-345." evidence="7">
    <original>H</original>
    <variation>A</variation>
    <location>
        <position position="350"/>
    </location>
</feature>
<gene>
    <name evidence="10" type="primary">DMA1</name>
    <name evidence="11" type="synonym">CHF1</name>
    <name evidence="14" type="ordered locus">YHR115C</name>
</gene>
<protein>
    <recommendedName>
        <fullName evidence="13">E3 ubiquitin-protein ligase DMA1</fullName>
        <ecNumber evidence="8 9">2.3.2.27</ecNumber>
    </recommendedName>
    <alternativeName>
        <fullName evidence="11">Checkpoint forkhead associated with RING domains-containing protein 1</fullName>
    </alternativeName>
    <alternativeName>
        <fullName evidence="10">Defective in mitotic arrest protein 1</fullName>
    </alternativeName>
    <alternativeName>
        <fullName evidence="12">RING-type E3 ubiquitin transferase DMA1</fullName>
    </alternativeName>
</protein>
<dbReference type="EC" id="2.3.2.27" evidence="8 9"/>
<dbReference type="EMBL" id="BK005578">
    <property type="protein sequence ID" value="DAA05593.1"/>
    <property type="molecule type" value="Genomic_DNA"/>
</dbReference>
<dbReference type="EMBL" id="U00059">
    <property type="protein sequence ID" value="AAB68865.1"/>
    <property type="molecule type" value="Genomic_DNA"/>
</dbReference>
<dbReference type="EMBL" id="BK006934">
    <property type="protein sequence ID" value="DAA06809.1"/>
    <property type="molecule type" value="Genomic_DNA"/>
</dbReference>
<dbReference type="PIR" id="S48957">
    <property type="entry name" value="S48957"/>
</dbReference>
<dbReference type="RefSeq" id="NP_011983.1">
    <property type="nucleotide sequence ID" value="NM_001179245.1"/>
</dbReference>
<dbReference type="SMR" id="P38823"/>
<dbReference type="BioGRID" id="36548">
    <property type="interactions" value="96"/>
</dbReference>
<dbReference type="DIP" id="DIP-1884N"/>
<dbReference type="FunCoup" id="P38823">
    <property type="interactions" value="136"/>
</dbReference>
<dbReference type="IntAct" id="P38823">
    <property type="interactions" value="26"/>
</dbReference>
<dbReference type="MINT" id="P38823"/>
<dbReference type="STRING" id="4932.YHR115C"/>
<dbReference type="iPTMnet" id="P38823"/>
<dbReference type="PaxDb" id="4932-YHR115C"/>
<dbReference type="PeptideAtlas" id="P38823"/>
<dbReference type="EnsemblFungi" id="YHR115C_mRNA">
    <property type="protein sequence ID" value="YHR115C"/>
    <property type="gene ID" value="YHR115C"/>
</dbReference>
<dbReference type="GeneID" id="856515"/>
<dbReference type="KEGG" id="sce:YHR115C"/>
<dbReference type="AGR" id="SGD:S000001157"/>
<dbReference type="SGD" id="S000001157">
    <property type="gene designation" value="DMA1"/>
</dbReference>
<dbReference type="VEuPathDB" id="FungiDB:YHR115C"/>
<dbReference type="eggNOG" id="KOG3872">
    <property type="taxonomic scope" value="Eukaryota"/>
</dbReference>
<dbReference type="GeneTree" id="ENSGT00940000176812"/>
<dbReference type="HOGENOM" id="CLU_017542_2_0_1"/>
<dbReference type="InParanoid" id="P38823"/>
<dbReference type="OMA" id="SHSWHYQ"/>
<dbReference type="OrthoDB" id="687730at2759"/>
<dbReference type="BioCyc" id="YEAST:G3O-31157-MONOMER"/>
<dbReference type="BioGRID-ORCS" id="856515">
    <property type="hits" value="0 hits in 10 CRISPR screens"/>
</dbReference>
<dbReference type="CD-CODE" id="E03F929F">
    <property type="entry name" value="Stress granule"/>
</dbReference>
<dbReference type="PRO" id="PR:P38823"/>
<dbReference type="Proteomes" id="UP000002311">
    <property type="component" value="Chromosome VIII"/>
</dbReference>
<dbReference type="RNAct" id="P38823">
    <property type="molecule type" value="protein"/>
</dbReference>
<dbReference type="GO" id="GO:0032153">
    <property type="term" value="C:cell division site"/>
    <property type="evidence" value="ECO:0000318"/>
    <property type="project" value="GO_Central"/>
</dbReference>
<dbReference type="GO" id="GO:0005737">
    <property type="term" value="C:cytoplasm"/>
    <property type="evidence" value="ECO:0007005"/>
    <property type="project" value="SGD"/>
</dbReference>
<dbReference type="GO" id="GO:0005829">
    <property type="term" value="C:cytosol"/>
    <property type="evidence" value="ECO:0000318"/>
    <property type="project" value="GO_Central"/>
</dbReference>
<dbReference type="GO" id="GO:0000151">
    <property type="term" value="C:ubiquitin ligase complex"/>
    <property type="evidence" value="ECO:0000318"/>
    <property type="project" value="GO_Central"/>
</dbReference>
<dbReference type="GO" id="GO:0061630">
    <property type="term" value="F:ubiquitin protein ligase activity"/>
    <property type="evidence" value="ECO:0000318"/>
    <property type="project" value="GO_Central"/>
</dbReference>
<dbReference type="GO" id="GO:0004842">
    <property type="term" value="F:ubiquitin-protein transferase activity"/>
    <property type="evidence" value="ECO:0000314"/>
    <property type="project" value="SGD"/>
</dbReference>
<dbReference type="GO" id="GO:0008270">
    <property type="term" value="F:zinc ion binding"/>
    <property type="evidence" value="ECO:0007669"/>
    <property type="project" value="UniProtKB-KW"/>
</dbReference>
<dbReference type="GO" id="GO:0032186">
    <property type="term" value="P:cellular bud neck septin ring organization"/>
    <property type="evidence" value="ECO:0000316"/>
    <property type="project" value="SGD"/>
</dbReference>
<dbReference type="GO" id="GO:0000132">
    <property type="term" value="P:establishment of mitotic spindle orientation"/>
    <property type="evidence" value="ECO:0000316"/>
    <property type="project" value="SGD"/>
</dbReference>
<dbReference type="GO" id="GO:0031578">
    <property type="term" value="P:mitotic spindle orientation checkpoint signaling"/>
    <property type="evidence" value="ECO:0000316"/>
    <property type="project" value="SGD"/>
</dbReference>
<dbReference type="GO" id="GO:0051865">
    <property type="term" value="P:protein autoubiquitination"/>
    <property type="evidence" value="ECO:0000314"/>
    <property type="project" value="SGD"/>
</dbReference>
<dbReference type="GO" id="GO:0097271">
    <property type="term" value="P:protein localization to bud neck"/>
    <property type="evidence" value="ECO:0000316"/>
    <property type="project" value="SGD"/>
</dbReference>
<dbReference type="GO" id="GO:0016567">
    <property type="term" value="P:protein ubiquitination"/>
    <property type="evidence" value="ECO:0000314"/>
    <property type="project" value="SGD"/>
</dbReference>
<dbReference type="GO" id="GO:0090337">
    <property type="term" value="P:regulation of formin-nucleated actin cable assembly"/>
    <property type="evidence" value="ECO:0000315"/>
    <property type="project" value="SGD"/>
</dbReference>
<dbReference type="GO" id="GO:0000921">
    <property type="term" value="P:septin ring assembly"/>
    <property type="evidence" value="ECO:0000316"/>
    <property type="project" value="SGD"/>
</dbReference>
<dbReference type="GO" id="GO:0006511">
    <property type="term" value="P:ubiquitin-dependent protein catabolic process"/>
    <property type="evidence" value="ECO:0000316"/>
    <property type="project" value="SGD"/>
</dbReference>
<dbReference type="CDD" id="cd22692">
    <property type="entry name" value="FHA_DMA-like"/>
    <property type="match status" value="1"/>
</dbReference>
<dbReference type="CDD" id="cd16458">
    <property type="entry name" value="RING-H2_Dmap-like"/>
    <property type="match status" value="1"/>
</dbReference>
<dbReference type="FunFam" id="3.30.40.10:FF:000426">
    <property type="entry name" value="DMA1p Ubiquitin-protein ligase (E3)"/>
    <property type="match status" value="1"/>
</dbReference>
<dbReference type="FunFam" id="2.60.200.20:FF:000030">
    <property type="entry name" value="FHA domain-containing protein"/>
    <property type="match status" value="1"/>
</dbReference>
<dbReference type="Gene3D" id="2.60.200.20">
    <property type="match status" value="1"/>
</dbReference>
<dbReference type="Gene3D" id="3.30.40.10">
    <property type="entry name" value="Zinc/RING finger domain, C3HC4 (zinc finger)"/>
    <property type="match status" value="1"/>
</dbReference>
<dbReference type="InterPro" id="IPR042823">
    <property type="entry name" value="Dma1/Dma2_RING-H2"/>
</dbReference>
<dbReference type="InterPro" id="IPR000253">
    <property type="entry name" value="FHA_dom"/>
</dbReference>
<dbReference type="InterPro" id="IPR008984">
    <property type="entry name" value="SMAD_FHA_dom_sf"/>
</dbReference>
<dbReference type="InterPro" id="IPR001841">
    <property type="entry name" value="Znf_RING"/>
</dbReference>
<dbReference type="InterPro" id="IPR013083">
    <property type="entry name" value="Znf_RING/FYVE/PHD"/>
</dbReference>
<dbReference type="PANTHER" id="PTHR15067:SF7">
    <property type="entry name" value="E3 UBIQUITIN-PROTEIN LIGASE DMA1-RELATED"/>
    <property type="match status" value="1"/>
</dbReference>
<dbReference type="PANTHER" id="PTHR15067">
    <property type="entry name" value="E3 UBIQUITIN-PROTEIN LIGASE RNF8"/>
    <property type="match status" value="1"/>
</dbReference>
<dbReference type="Pfam" id="PF00498">
    <property type="entry name" value="FHA"/>
    <property type="match status" value="1"/>
</dbReference>
<dbReference type="Pfam" id="PF17123">
    <property type="entry name" value="zf-RING_11"/>
    <property type="match status" value="1"/>
</dbReference>
<dbReference type="SMART" id="SM00240">
    <property type="entry name" value="FHA"/>
    <property type="match status" value="1"/>
</dbReference>
<dbReference type="SUPFAM" id="SSF57850">
    <property type="entry name" value="RING/U-box"/>
    <property type="match status" value="1"/>
</dbReference>
<dbReference type="SUPFAM" id="SSF49879">
    <property type="entry name" value="SMAD/FHA domain"/>
    <property type="match status" value="1"/>
</dbReference>
<dbReference type="PROSITE" id="PS50006">
    <property type="entry name" value="FHA_DOMAIN"/>
    <property type="match status" value="1"/>
</dbReference>
<dbReference type="PROSITE" id="PS50089">
    <property type="entry name" value="ZF_RING_2"/>
    <property type="match status" value="1"/>
</dbReference>
<sequence>MSTNTVPSSPPNQTPPAASGIATSHDHTKFNNPIRLPISISLTINDTPNNNSNNNSVSNGLGILPSRTATSLVVANNGSANGNVGATAAAAATVETNTAPAVNTTKSIRHFIYPPNQVNQTEFSLDIHLPPNTSLPERIDQSTLKRRMDKHGLFSIRLTPFIDTSSTSVANQGLFFDPIIRTAGAGSQIIIGRYTERVREAISKIPDQYHPVVFKSKVISRTHGCFKVDDQGNWFLKDVKSSSGTFLNHQRLSSASTTSKDYLLHDGDIIQLGMDFRGGTEEIYRCVKMKIELNKSWKLKANAFNKEALSRIKNLQKLTTGLEQEDCSICLNKIKPCQAIFISPCAHSWHFHCVRRLVIMNYPQFMCPNCRTNCDLETTLESESESEFENEDEDEPDIEMDIDMEINNNLGVRLVD</sequence>